<name>CCA_BACC4</name>
<gene>
    <name evidence="1" type="primary">cca</name>
    <name type="ordered locus">BCB4264_A1592</name>
</gene>
<dbReference type="EC" id="2.7.7.72" evidence="1"/>
<dbReference type="EMBL" id="CP001176">
    <property type="protein sequence ID" value="ACK62540.1"/>
    <property type="molecule type" value="Genomic_DNA"/>
</dbReference>
<dbReference type="RefSeq" id="WP_000439321.1">
    <property type="nucleotide sequence ID" value="NZ_VEHB01000003.1"/>
</dbReference>
<dbReference type="SMR" id="B7HHU0"/>
<dbReference type="KEGG" id="bcb:BCB4264_A1592"/>
<dbReference type="HOGENOM" id="CLU_015961_3_0_9"/>
<dbReference type="Proteomes" id="UP000007096">
    <property type="component" value="Chromosome"/>
</dbReference>
<dbReference type="GO" id="GO:0005524">
    <property type="term" value="F:ATP binding"/>
    <property type="evidence" value="ECO:0007669"/>
    <property type="project" value="UniProtKB-UniRule"/>
</dbReference>
<dbReference type="GO" id="GO:0004810">
    <property type="term" value="F:CCA tRNA nucleotidyltransferase activity"/>
    <property type="evidence" value="ECO:0007669"/>
    <property type="project" value="UniProtKB-UniRule"/>
</dbReference>
<dbReference type="GO" id="GO:0000287">
    <property type="term" value="F:magnesium ion binding"/>
    <property type="evidence" value="ECO:0007669"/>
    <property type="project" value="UniProtKB-UniRule"/>
</dbReference>
<dbReference type="GO" id="GO:0000049">
    <property type="term" value="F:tRNA binding"/>
    <property type="evidence" value="ECO:0007669"/>
    <property type="project" value="UniProtKB-UniRule"/>
</dbReference>
<dbReference type="GO" id="GO:0042245">
    <property type="term" value="P:RNA repair"/>
    <property type="evidence" value="ECO:0007669"/>
    <property type="project" value="UniProtKB-KW"/>
</dbReference>
<dbReference type="GO" id="GO:0001680">
    <property type="term" value="P:tRNA 3'-terminal CCA addition"/>
    <property type="evidence" value="ECO:0007669"/>
    <property type="project" value="UniProtKB-UniRule"/>
</dbReference>
<dbReference type="CDD" id="cd05398">
    <property type="entry name" value="NT_ClassII-CCAase"/>
    <property type="match status" value="1"/>
</dbReference>
<dbReference type="Gene3D" id="1.10.110.30">
    <property type="match status" value="1"/>
</dbReference>
<dbReference type="Gene3D" id="1.10.246.80">
    <property type="match status" value="1"/>
</dbReference>
<dbReference type="Gene3D" id="1.20.58.560">
    <property type="match status" value="1"/>
</dbReference>
<dbReference type="Gene3D" id="3.30.460.10">
    <property type="entry name" value="Beta Polymerase, domain 2"/>
    <property type="match status" value="1"/>
</dbReference>
<dbReference type="HAMAP" id="MF_01263">
    <property type="entry name" value="CCA_bact_type3"/>
    <property type="match status" value="1"/>
</dbReference>
<dbReference type="InterPro" id="IPR050264">
    <property type="entry name" value="Bact_CCA-adding_enz_type3_sf"/>
</dbReference>
<dbReference type="InterPro" id="IPR032810">
    <property type="entry name" value="CCA-adding_enz_C"/>
</dbReference>
<dbReference type="InterPro" id="IPR023068">
    <property type="entry name" value="CCA-adding_enz_firmicutes"/>
</dbReference>
<dbReference type="InterPro" id="IPR043519">
    <property type="entry name" value="NT_sf"/>
</dbReference>
<dbReference type="InterPro" id="IPR002646">
    <property type="entry name" value="PolA_pol_head_dom"/>
</dbReference>
<dbReference type="InterPro" id="IPR032828">
    <property type="entry name" value="PolyA_RNA-bd"/>
</dbReference>
<dbReference type="NCBIfam" id="NF009814">
    <property type="entry name" value="PRK13299.1"/>
    <property type="match status" value="1"/>
</dbReference>
<dbReference type="PANTHER" id="PTHR46173">
    <property type="entry name" value="CCA TRNA NUCLEOTIDYLTRANSFERASE 1, MITOCHONDRIAL"/>
    <property type="match status" value="1"/>
</dbReference>
<dbReference type="PANTHER" id="PTHR46173:SF1">
    <property type="entry name" value="CCA TRNA NUCLEOTIDYLTRANSFERASE 1, MITOCHONDRIAL"/>
    <property type="match status" value="1"/>
</dbReference>
<dbReference type="Pfam" id="PF01743">
    <property type="entry name" value="PolyA_pol"/>
    <property type="match status" value="1"/>
</dbReference>
<dbReference type="Pfam" id="PF12627">
    <property type="entry name" value="PolyA_pol_RNAbd"/>
    <property type="match status" value="1"/>
</dbReference>
<dbReference type="Pfam" id="PF13735">
    <property type="entry name" value="tRNA_NucTran2_2"/>
    <property type="match status" value="1"/>
</dbReference>
<dbReference type="SUPFAM" id="SSF81301">
    <property type="entry name" value="Nucleotidyltransferase"/>
    <property type="match status" value="1"/>
</dbReference>
<dbReference type="SUPFAM" id="SSF81891">
    <property type="entry name" value="Poly A polymerase C-terminal region-like"/>
    <property type="match status" value="1"/>
</dbReference>
<protein>
    <recommendedName>
        <fullName evidence="1">CCA-adding enzyme</fullName>
        <ecNumber evidence="1">2.7.7.72</ecNumber>
    </recommendedName>
    <alternativeName>
        <fullName evidence="1">CCA tRNA nucleotidyltransferase</fullName>
    </alternativeName>
    <alternativeName>
        <fullName evidence="1">tRNA CCA-pyrophosphorylase</fullName>
    </alternativeName>
    <alternativeName>
        <fullName evidence="1">tRNA adenylyl-/cytidylyl- transferase</fullName>
    </alternativeName>
    <alternativeName>
        <fullName evidence="1">tRNA nucleotidyltransferase</fullName>
    </alternativeName>
    <alternativeName>
        <fullName evidence="1">tRNA-NT</fullName>
    </alternativeName>
</protein>
<feature type="chain" id="PRO_1000140070" description="CCA-adding enzyme">
    <location>
        <begin position="1"/>
        <end position="397"/>
    </location>
</feature>
<feature type="binding site" evidence="1">
    <location>
        <position position="26"/>
    </location>
    <ligand>
        <name>ATP</name>
        <dbReference type="ChEBI" id="CHEBI:30616"/>
    </ligand>
</feature>
<feature type="binding site" evidence="1">
    <location>
        <position position="26"/>
    </location>
    <ligand>
        <name>CTP</name>
        <dbReference type="ChEBI" id="CHEBI:37563"/>
    </ligand>
</feature>
<feature type="binding site" evidence="1">
    <location>
        <position position="29"/>
    </location>
    <ligand>
        <name>ATP</name>
        <dbReference type="ChEBI" id="CHEBI:30616"/>
    </ligand>
</feature>
<feature type="binding site" evidence="1">
    <location>
        <position position="29"/>
    </location>
    <ligand>
        <name>CTP</name>
        <dbReference type="ChEBI" id="CHEBI:37563"/>
    </ligand>
</feature>
<feature type="binding site" evidence="1">
    <location>
        <position position="39"/>
    </location>
    <ligand>
        <name>Mg(2+)</name>
        <dbReference type="ChEBI" id="CHEBI:18420"/>
    </ligand>
</feature>
<feature type="binding site" evidence="1">
    <location>
        <position position="41"/>
    </location>
    <ligand>
        <name>Mg(2+)</name>
        <dbReference type="ChEBI" id="CHEBI:18420"/>
    </ligand>
</feature>
<feature type="binding site" evidence="1">
    <location>
        <position position="110"/>
    </location>
    <ligand>
        <name>ATP</name>
        <dbReference type="ChEBI" id="CHEBI:30616"/>
    </ligand>
</feature>
<feature type="binding site" evidence="1">
    <location>
        <position position="110"/>
    </location>
    <ligand>
        <name>CTP</name>
        <dbReference type="ChEBI" id="CHEBI:37563"/>
    </ligand>
</feature>
<feature type="binding site" evidence="1">
    <location>
        <position position="153"/>
    </location>
    <ligand>
        <name>ATP</name>
        <dbReference type="ChEBI" id="CHEBI:30616"/>
    </ligand>
</feature>
<feature type="binding site" evidence="1">
    <location>
        <position position="153"/>
    </location>
    <ligand>
        <name>CTP</name>
        <dbReference type="ChEBI" id="CHEBI:37563"/>
    </ligand>
</feature>
<feature type="binding site" evidence="1">
    <location>
        <position position="156"/>
    </location>
    <ligand>
        <name>ATP</name>
        <dbReference type="ChEBI" id="CHEBI:30616"/>
    </ligand>
</feature>
<feature type="binding site" evidence="1">
    <location>
        <position position="156"/>
    </location>
    <ligand>
        <name>CTP</name>
        <dbReference type="ChEBI" id="CHEBI:37563"/>
    </ligand>
</feature>
<feature type="binding site" evidence="1">
    <location>
        <position position="159"/>
    </location>
    <ligand>
        <name>ATP</name>
        <dbReference type="ChEBI" id="CHEBI:30616"/>
    </ligand>
</feature>
<feature type="binding site" evidence="1">
    <location>
        <position position="159"/>
    </location>
    <ligand>
        <name>CTP</name>
        <dbReference type="ChEBI" id="CHEBI:37563"/>
    </ligand>
</feature>
<feature type="binding site" evidence="1">
    <location>
        <position position="162"/>
    </location>
    <ligand>
        <name>ATP</name>
        <dbReference type="ChEBI" id="CHEBI:30616"/>
    </ligand>
</feature>
<feature type="binding site" evidence="1">
    <location>
        <position position="162"/>
    </location>
    <ligand>
        <name>CTP</name>
        <dbReference type="ChEBI" id="CHEBI:37563"/>
    </ligand>
</feature>
<reference key="1">
    <citation type="submission" date="2008-10" db="EMBL/GenBank/DDBJ databases">
        <title>Genome sequence of Bacillus cereus B4264.</title>
        <authorList>
            <person name="Dodson R.J."/>
            <person name="Durkin A.S."/>
            <person name="Rosovitz M.J."/>
            <person name="Rasko D.A."/>
            <person name="Hoffmaster A."/>
            <person name="Ravel J."/>
            <person name="Sutton G."/>
        </authorList>
    </citation>
    <scope>NUCLEOTIDE SEQUENCE [LARGE SCALE GENOMIC DNA]</scope>
    <source>
        <strain>B4264</strain>
    </source>
</reference>
<accession>B7HHU0</accession>
<evidence type="ECO:0000255" key="1">
    <source>
        <dbReference type="HAMAP-Rule" id="MF_01263"/>
    </source>
</evidence>
<keyword id="KW-0067">ATP-binding</keyword>
<keyword id="KW-0460">Magnesium</keyword>
<keyword id="KW-0479">Metal-binding</keyword>
<keyword id="KW-0547">Nucleotide-binding</keyword>
<keyword id="KW-0548">Nucleotidyltransferase</keyword>
<keyword id="KW-0692">RNA repair</keyword>
<keyword id="KW-0694">RNA-binding</keyword>
<keyword id="KW-0808">Transferase</keyword>
<keyword id="KW-0819">tRNA processing</keyword>
<sequence>MERFKKASSIIETLKQQGHEAYFVGGSVRDLIIDRPIGDIDIATSALPEEVMAIFPRNVPVGLEHGTVIVVENGEPYEVTTFRTESEYEDFRRPSSVQFVRSLEEDLKRRDFTMNAIAMTEEGKMVDLFAGQEAIQQREIVTVGNAADRFQEDALRMMRGIRFVSTLGFSLEMKTKQAIETYGHLLEHIAIERITVEFEKLLTGTYCVKGLKELVETKLFSHLPYLQMSEERLLKATQYKWDSFETDIEAWAFFLYCIGEEHPSVFLRQWKFSNKKIKDIVAVLLTIRTRKEKDWDTVLLYKTGIHIAEMAERVYEAMIERYDPTSVERVQSMFHALPIQERQEMNVTGNDLLNWANKKPGPWVAEMLQKIEEAIVQGNVVNEKERIREWLQGCNLL</sequence>
<comment type="function">
    <text evidence="1">Catalyzes the addition and repair of the essential 3'-terminal CCA sequence in tRNAs without using a nucleic acid template. Adds these three nucleotides in the order of C, C, and A to the tRNA nucleotide-73, using CTP and ATP as substrates and producing inorganic pyrophosphate. tRNA 3'-terminal CCA addition is required both for tRNA processing and repair. Also involved in tRNA surveillance by mediating tandem CCA addition to generate a CCACCA at the 3' terminus of unstable tRNAs. While stable tRNAs receive only 3'-terminal CCA, unstable tRNAs are marked with CCACCA and rapidly degraded.</text>
</comment>
<comment type="catalytic activity">
    <reaction evidence="1">
        <text>a tRNA precursor + 2 CTP + ATP = a tRNA with a 3' CCA end + 3 diphosphate</text>
        <dbReference type="Rhea" id="RHEA:14433"/>
        <dbReference type="Rhea" id="RHEA-COMP:10465"/>
        <dbReference type="Rhea" id="RHEA-COMP:10468"/>
        <dbReference type="ChEBI" id="CHEBI:30616"/>
        <dbReference type="ChEBI" id="CHEBI:33019"/>
        <dbReference type="ChEBI" id="CHEBI:37563"/>
        <dbReference type="ChEBI" id="CHEBI:74896"/>
        <dbReference type="ChEBI" id="CHEBI:83071"/>
        <dbReference type="EC" id="2.7.7.72"/>
    </reaction>
</comment>
<comment type="catalytic activity">
    <reaction evidence="1">
        <text>a tRNA with a 3' CCA end + 2 CTP + ATP = a tRNA with a 3' CCACCA end + 3 diphosphate</text>
        <dbReference type="Rhea" id="RHEA:76235"/>
        <dbReference type="Rhea" id="RHEA-COMP:10468"/>
        <dbReference type="Rhea" id="RHEA-COMP:18655"/>
        <dbReference type="ChEBI" id="CHEBI:30616"/>
        <dbReference type="ChEBI" id="CHEBI:33019"/>
        <dbReference type="ChEBI" id="CHEBI:37563"/>
        <dbReference type="ChEBI" id="CHEBI:83071"/>
        <dbReference type="ChEBI" id="CHEBI:195187"/>
    </reaction>
    <physiologicalReaction direction="left-to-right" evidence="1">
        <dbReference type="Rhea" id="RHEA:76236"/>
    </physiologicalReaction>
</comment>
<comment type="cofactor">
    <cofactor evidence="1">
        <name>Mg(2+)</name>
        <dbReference type="ChEBI" id="CHEBI:18420"/>
    </cofactor>
</comment>
<comment type="subunit">
    <text evidence="1">Homodimer.</text>
</comment>
<comment type="miscellaneous">
    <text evidence="1">A single active site specifically recognizes both ATP and CTP and is responsible for their addition.</text>
</comment>
<comment type="similarity">
    <text evidence="1">Belongs to the tRNA nucleotidyltransferase/poly(A) polymerase family. Bacterial CCA-adding enzyme type 3 subfamily.</text>
</comment>
<proteinExistence type="inferred from homology"/>
<organism>
    <name type="scientific">Bacillus cereus (strain B4264)</name>
    <dbReference type="NCBI Taxonomy" id="405532"/>
    <lineage>
        <taxon>Bacteria</taxon>
        <taxon>Bacillati</taxon>
        <taxon>Bacillota</taxon>
        <taxon>Bacilli</taxon>
        <taxon>Bacillales</taxon>
        <taxon>Bacillaceae</taxon>
        <taxon>Bacillus</taxon>
        <taxon>Bacillus cereus group</taxon>
    </lineage>
</organism>